<evidence type="ECO:0000250" key="1"/>
<evidence type="ECO:0000305" key="2"/>
<accession>Q9RUE2</accession>
<feature type="chain" id="PRO_0000151907" description="ATP phosphoribosyltransferase">
    <location>
        <begin position="1"/>
        <end position="218"/>
    </location>
</feature>
<reference key="1">
    <citation type="journal article" date="1999" name="Science">
        <title>Genome sequence of the radioresistant bacterium Deinococcus radiodurans R1.</title>
        <authorList>
            <person name="White O."/>
            <person name="Eisen J.A."/>
            <person name="Heidelberg J.F."/>
            <person name="Hickey E.K."/>
            <person name="Peterson J.D."/>
            <person name="Dodson R.J."/>
            <person name="Haft D.H."/>
            <person name="Gwinn M.L."/>
            <person name="Nelson W.C."/>
            <person name="Richardson D.L."/>
            <person name="Moffat K.S."/>
            <person name="Qin H."/>
            <person name="Jiang L."/>
            <person name="Pamphile W."/>
            <person name="Crosby M."/>
            <person name="Shen M."/>
            <person name="Vamathevan J.J."/>
            <person name="Lam P."/>
            <person name="McDonald L.A."/>
            <person name="Utterback T.R."/>
            <person name="Zalewski C."/>
            <person name="Makarova K.S."/>
            <person name="Aravind L."/>
            <person name="Daly M.J."/>
            <person name="Minton K.W."/>
            <person name="Fleischmann R.D."/>
            <person name="Ketchum K.A."/>
            <person name="Nelson K.E."/>
            <person name="Salzberg S.L."/>
            <person name="Smith H.O."/>
            <person name="Venter J.C."/>
            <person name="Fraser C.M."/>
        </authorList>
    </citation>
    <scope>NUCLEOTIDE SEQUENCE [LARGE SCALE GENOMIC DNA]</scope>
    <source>
        <strain>ATCC 13939 / DSM 20539 / JCM 16871 / CCUG 27074 / LMG 4051 / NBRC 15346 / NCIMB 9279 / VKM B-1422 / R1</strain>
    </source>
</reference>
<protein>
    <recommendedName>
        <fullName>ATP phosphoribosyltransferase</fullName>
        <shortName>ATP-PRT</shortName>
        <shortName>ATP-PRTase</shortName>
        <ecNumber>2.4.2.17</ecNumber>
    </recommendedName>
</protein>
<sequence length="218" mass="23736">MTAQTTPERRPDHLTLALPKGRIMDDAIALLSQAGLPLTRPEASRALRHEFPGVTVLELRNQDVPVYVDLGVADAGIVGKDVLLEAGRPVYEPVDLHFAECRLSLIREIGASGPIARVGTKYPRAARAYLQERGIPAEVVKLSGNIELAALTGLADAVIDLVQTGSTLRANHLEEVDVLFHSSARLIVNRTALKLRRERLRPLIARLRELTAPAGEES</sequence>
<organism>
    <name type="scientific">Deinococcus radiodurans (strain ATCC 13939 / DSM 20539 / JCM 16871 / CCUG 27074 / LMG 4051 / NBRC 15346 / NCIMB 9279 / VKM B-1422 / R1)</name>
    <dbReference type="NCBI Taxonomy" id="243230"/>
    <lineage>
        <taxon>Bacteria</taxon>
        <taxon>Thermotogati</taxon>
        <taxon>Deinococcota</taxon>
        <taxon>Deinococci</taxon>
        <taxon>Deinococcales</taxon>
        <taxon>Deinococcaceae</taxon>
        <taxon>Deinococcus</taxon>
    </lineage>
</organism>
<keyword id="KW-0028">Amino-acid biosynthesis</keyword>
<keyword id="KW-0067">ATP-binding</keyword>
<keyword id="KW-0963">Cytoplasm</keyword>
<keyword id="KW-0328">Glycosyltransferase</keyword>
<keyword id="KW-0368">Histidine biosynthesis</keyword>
<keyword id="KW-0547">Nucleotide-binding</keyword>
<keyword id="KW-1185">Reference proteome</keyword>
<keyword id="KW-0808">Transferase</keyword>
<dbReference type="EC" id="2.4.2.17"/>
<dbReference type="EMBL" id="AE000513">
    <property type="protein sequence ID" value="AAF11016.1"/>
    <property type="molecule type" value="Genomic_DNA"/>
</dbReference>
<dbReference type="PIR" id="C75394">
    <property type="entry name" value="C75394"/>
</dbReference>
<dbReference type="RefSeq" id="NP_295168.1">
    <property type="nucleotide sequence ID" value="NC_001263.1"/>
</dbReference>
<dbReference type="RefSeq" id="WP_010888084.1">
    <property type="nucleotide sequence ID" value="NC_001263.1"/>
</dbReference>
<dbReference type="SMR" id="Q9RUE2"/>
<dbReference type="FunCoup" id="Q9RUE2">
    <property type="interactions" value="394"/>
</dbReference>
<dbReference type="STRING" id="243230.DR_1445"/>
<dbReference type="PaxDb" id="243230-DR_1445"/>
<dbReference type="EnsemblBacteria" id="AAF11016">
    <property type="protein sequence ID" value="AAF11016"/>
    <property type="gene ID" value="DR_1445"/>
</dbReference>
<dbReference type="GeneID" id="69517686"/>
<dbReference type="KEGG" id="dra:DR_1445"/>
<dbReference type="PATRIC" id="fig|243230.17.peg.1642"/>
<dbReference type="eggNOG" id="COG0040">
    <property type="taxonomic scope" value="Bacteria"/>
</dbReference>
<dbReference type="HOGENOM" id="CLU_038115_2_0_0"/>
<dbReference type="InParanoid" id="Q9RUE2"/>
<dbReference type="OrthoDB" id="9801867at2"/>
<dbReference type="UniPathway" id="UPA00031">
    <property type="reaction ID" value="UER00006"/>
</dbReference>
<dbReference type="Proteomes" id="UP000002524">
    <property type="component" value="Chromosome 1"/>
</dbReference>
<dbReference type="GO" id="GO:0005737">
    <property type="term" value="C:cytoplasm"/>
    <property type="evidence" value="ECO:0007669"/>
    <property type="project" value="UniProtKB-SubCell"/>
</dbReference>
<dbReference type="GO" id="GO:0005524">
    <property type="term" value="F:ATP binding"/>
    <property type="evidence" value="ECO:0007669"/>
    <property type="project" value="UniProtKB-KW"/>
</dbReference>
<dbReference type="GO" id="GO:0003879">
    <property type="term" value="F:ATP phosphoribosyltransferase activity"/>
    <property type="evidence" value="ECO:0000318"/>
    <property type="project" value="GO_Central"/>
</dbReference>
<dbReference type="GO" id="GO:0000105">
    <property type="term" value="P:L-histidine biosynthetic process"/>
    <property type="evidence" value="ECO:0000318"/>
    <property type="project" value="GO_Central"/>
</dbReference>
<dbReference type="CDD" id="cd13595">
    <property type="entry name" value="PBP2_HisGs"/>
    <property type="match status" value="1"/>
</dbReference>
<dbReference type="FunFam" id="3.40.190.10:FF:000008">
    <property type="entry name" value="ATP phosphoribosyltransferase"/>
    <property type="match status" value="1"/>
</dbReference>
<dbReference type="Gene3D" id="3.40.190.10">
    <property type="entry name" value="Periplasmic binding protein-like II"/>
    <property type="match status" value="2"/>
</dbReference>
<dbReference type="HAMAP" id="MF_01018">
    <property type="entry name" value="HisG_Short"/>
    <property type="match status" value="1"/>
</dbReference>
<dbReference type="InterPro" id="IPR013820">
    <property type="entry name" value="ATP_PRibTrfase_cat"/>
</dbReference>
<dbReference type="InterPro" id="IPR018198">
    <property type="entry name" value="ATP_PRibTrfase_CS"/>
</dbReference>
<dbReference type="InterPro" id="IPR001348">
    <property type="entry name" value="ATP_PRibTrfase_HisG"/>
</dbReference>
<dbReference type="InterPro" id="IPR024893">
    <property type="entry name" value="ATP_PRibTrfase_HisG_short"/>
</dbReference>
<dbReference type="NCBIfam" id="TIGR00070">
    <property type="entry name" value="hisG"/>
    <property type="match status" value="1"/>
</dbReference>
<dbReference type="PANTHER" id="PTHR21403:SF8">
    <property type="entry name" value="ATP PHOSPHORIBOSYLTRANSFERASE"/>
    <property type="match status" value="1"/>
</dbReference>
<dbReference type="PANTHER" id="PTHR21403">
    <property type="entry name" value="ATP PHOSPHORIBOSYLTRANSFERASE ATP-PRTASE"/>
    <property type="match status" value="1"/>
</dbReference>
<dbReference type="Pfam" id="PF01634">
    <property type="entry name" value="HisG"/>
    <property type="match status" value="1"/>
</dbReference>
<dbReference type="SUPFAM" id="SSF53850">
    <property type="entry name" value="Periplasmic binding protein-like II"/>
    <property type="match status" value="1"/>
</dbReference>
<dbReference type="PROSITE" id="PS01316">
    <property type="entry name" value="ATP_P_PHORIBOSYLTR"/>
    <property type="match status" value="1"/>
</dbReference>
<comment type="function">
    <text evidence="1">Catalyzes the condensation of ATP and 5-phosphoribose 1-diphosphate to form N'-(5'-phosphoribosyl)-ATP (PR-ATP). Has a crucial role in the pathway because the rate of histidine biosynthesis seems to be controlled primarily by regulation of HisG enzymatic activity (By similarity).</text>
</comment>
<comment type="catalytic activity">
    <reaction>
        <text>1-(5-phospho-beta-D-ribosyl)-ATP + diphosphate = 5-phospho-alpha-D-ribose 1-diphosphate + ATP</text>
        <dbReference type="Rhea" id="RHEA:18473"/>
        <dbReference type="ChEBI" id="CHEBI:30616"/>
        <dbReference type="ChEBI" id="CHEBI:33019"/>
        <dbReference type="ChEBI" id="CHEBI:58017"/>
        <dbReference type="ChEBI" id="CHEBI:73183"/>
        <dbReference type="EC" id="2.4.2.17"/>
    </reaction>
</comment>
<comment type="pathway">
    <text>Amino-acid biosynthesis; L-histidine biosynthesis; L-histidine from 5-phospho-alpha-D-ribose 1-diphosphate: step 1/9.</text>
</comment>
<comment type="subunit">
    <text evidence="1">Heteromultimer composed of HisG and HisZ subunits.</text>
</comment>
<comment type="subcellular location">
    <subcellularLocation>
        <location evidence="1">Cytoplasm</location>
    </subcellularLocation>
</comment>
<comment type="domain">
    <text>Lacks the C-terminal regulatory region which is replaced by HisZ.</text>
</comment>
<comment type="similarity">
    <text evidence="2">Belongs to the ATP phosphoribosyltransferase family. Short subfamily.</text>
</comment>
<proteinExistence type="inferred from homology"/>
<name>HIS1_DEIRA</name>
<gene>
    <name type="primary">hisG</name>
    <name type="ordered locus">DR_1445</name>
</gene>